<feature type="chain" id="PRO_0000073076" description="Ovomucoid">
    <location>
        <begin position="1" status="less than"/>
        <end position="54" status="greater than"/>
    </location>
</feature>
<feature type="domain" description="Kazal-like" evidence="1">
    <location>
        <begin position="4"/>
        <end position="54"/>
    </location>
</feature>
<feature type="site" description="Reactive bond 3">
    <location>
        <begin position="16"/>
        <end position="17"/>
    </location>
</feature>
<feature type="glycosylation site" description="N-linked (GlcNAc...) asparagine" evidence="2">
    <location>
        <position position="43"/>
    </location>
</feature>
<feature type="disulfide bond">
    <location>
        <begin position="6"/>
        <end position="36"/>
    </location>
</feature>
<feature type="disulfide bond">
    <location>
        <begin position="14"/>
        <end position="33"/>
    </location>
</feature>
<feature type="disulfide bond">
    <location>
        <begin position="22"/>
        <end position="54"/>
    </location>
</feature>
<feature type="non-terminal residue">
    <location>
        <position position="1"/>
    </location>
</feature>
<feature type="non-terminal residue">
    <location>
        <position position="54"/>
    </location>
</feature>
<organism>
    <name type="scientific">Carpococcyx renauldi</name>
    <name type="common">Coral-billed ground-cuckoo</name>
    <dbReference type="NCBI Taxonomy" id="8943"/>
    <lineage>
        <taxon>Eukaryota</taxon>
        <taxon>Metazoa</taxon>
        <taxon>Chordata</taxon>
        <taxon>Craniata</taxon>
        <taxon>Vertebrata</taxon>
        <taxon>Euteleostomi</taxon>
        <taxon>Archelosauria</taxon>
        <taxon>Archosauria</taxon>
        <taxon>Dinosauria</taxon>
        <taxon>Saurischia</taxon>
        <taxon>Theropoda</taxon>
        <taxon>Coelurosauria</taxon>
        <taxon>Aves</taxon>
        <taxon>Neognathae</taxon>
        <taxon>Neoaves</taxon>
        <taxon>Otidimorphae</taxon>
        <taxon>Cuculiformes</taxon>
        <taxon>Cuculidae</taxon>
        <taxon>Carpococcyx</taxon>
    </lineage>
</organism>
<proteinExistence type="evidence at protein level"/>
<dbReference type="PIR" id="A31438">
    <property type="entry name" value="A31438"/>
</dbReference>
<dbReference type="SMR" id="P05616"/>
<dbReference type="iPTMnet" id="P05616"/>
<dbReference type="GO" id="GO:0005576">
    <property type="term" value="C:extracellular region"/>
    <property type="evidence" value="ECO:0007669"/>
    <property type="project" value="UniProtKB-SubCell"/>
</dbReference>
<dbReference type="GO" id="GO:0004867">
    <property type="term" value="F:serine-type endopeptidase inhibitor activity"/>
    <property type="evidence" value="ECO:0007669"/>
    <property type="project" value="UniProtKB-KW"/>
</dbReference>
<dbReference type="CDD" id="cd00104">
    <property type="entry name" value="KAZAL_FS"/>
    <property type="match status" value="1"/>
</dbReference>
<dbReference type="FunFam" id="3.30.60.30:FF:000037">
    <property type="entry name" value="Ovomucoid"/>
    <property type="match status" value="1"/>
</dbReference>
<dbReference type="Gene3D" id="3.30.60.30">
    <property type="match status" value="1"/>
</dbReference>
<dbReference type="InterPro" id="IPR050159">
    <property type="entry name" value="Kazal-type_SerProtInhib"/>
</dbReference>
<dbReference type="InterPro" id="IPR002350">
    <property type="entry name" value="Kazal_dom"/>
</dbReference>
<dbReference type="InterPro" id="IPR036058">
    <property type="entry name" value="Kazal_dom_sf"/>
</dbReference>
<dbReference type="PANTHER" id="PTHR47499:SF1">
    <property type="entry name" value="SERINE PROTEASE INHIBITOR KAZAL-TYPE 7"/>
    <property type="match status" value="1"/>
</dbReference>
<dbReference type="PANTHER" id="PTHR47499">
    <property type="entry name" value="SERINE PROTEASE INHIBITOR KAZAL-TYPE 7 SPINK7"/>
    <property type="match status" value="1"/>
</dbReference>
<dbReference type="Pfam" id="PF00050">
    <property type="entry name" value="Kazal_1"/>
    <property type="match status" value="1"/>
</dbReference>
<dbReference type="SMART" id="SM00280">
    <property type="entry name" value="KAZAL"/>
    <property type="match status" value="1"/>
</dbReference>
<dbReference type="SUPFAM" id="SSF100895">
    <property type="entry name" value="Kazal-type serine protease inhibitors"/>
    <property type="match status" value="1"/>
</dbReference>
<dbReference type="PROSITE" id="PS00282">
    <property type="entry name" value="KAZAL_1"/>
    <property type="match status" value="1"/>
</dbReference>
<dbReference type="PROSITE" id="PS51465">
    <property type="entry name" value="KAZAL_2"/>
    <property type="match status" value="1"/>
</dbReference>
<evidence type="ECO:0000255" key="1">
    <source>
        <dbReference type="PROSITE-ProRule" id="PRU00798"/>
    </source>
</evidence>
<evidence type="ECO:0000269" key="2">
    <source>
    </source>
</evidence>
<keyword id="KW-0903">Direct protein sequencing</keyword>
<keyword id="KW-1015">Disulfide bond</keyword>
<keyword id="KW-0325">Glycoprotein</keyword>
<keyword id="KW-0646">Protease inhibitor</keyword>
<keyword id="KW-0677">Repeat</keyword>
<keyword id="KW-0964">Secreted</keyword>
<keyword id="KW-0722">Serine protease inhibitor</keyword>
<name>IOVO_CARRE</name>
<protein>
    <recommendedName>
        <fullName>Ovomucoid</fullName>
    </recommendedName>
</protein>
<comment type="subcellular location">
    <subcellularLocation>
        <location>Secreted</location>
    </subcellularLocation>
</comment>
<comment type="domain">
    <text>Avian ovomucoid consists of three homologous, tandem Kazal family inhibitory domains.</text>
</comment>
<reference key="1">
    <citation type="journal article" date="1987" name="Biochemistry">
        <title>Ovomucoid third domains from 100 avian species: isolation, sequences, and hypervariability of enzyme-inhibitor contact residues.</title>
        <authorList>
            <person name="Laskowski M. Jr."/>
            <person name="Kato I."/>
            <person name="Ardelt W."/>
            <person name="Cook J."/>
            <person name="Denton A."/>
            <person name="Empie M.W."/>
            <person name="Kohr W.J."/>
            <person name="Park S.J."/>
            <person name="Parks K."/>
            <person name="Schatzley B.L."/>
            <person name="Schoenberger O.L."/>
            <person name="Tashiro M."/>
            <person name="Vichot G."/>
            <person name="Whatley H.E."/>
            <person name="Wieczorek A."/>
            <person name="Wieczorek M."/>
        </authorList>
    </citation>
    <scope>PROTEIN SEQUENCE</scope>
</reference>
<accession>P05616</accession>
<sequence>IATVDCSDYPKPVCTLEDMPLCGSDNITYHNKCYFCNAVAHSNGTLTFSHFGKC</sequence>